<organism>
    <name type="scientific">Nasturtium officinale</name>
    <name type="common">Watercress</name>
    <name type="synonym">Rorippa nasturtium-aquaticum</name>
    <dbReference type="NCBI Taxonomy" id="65948"/>
    <lineage>
        <taxon>Eukaryota</taxon>
        <taxon>Viridiplantae</taxon>
        <taxon>Streptophyta</taxon>
        <taxon>Embryophyta</taxon>
        <taxon>Tracheophyta</taxon>
        <taxon>Spermatophyta</taxon>
        <taxon>Magnoliopsida</taxon>
        <taxon>eudicotyledons</taxon>
        <taxon>Gunneridae</taxon>
        <taxon>Pentapetalae</taxon>
        <taxon>rosids</taxon>
        <taxon>malvids</taxon>
        <taxon>Brassicales</taxon>
        <taxon>Brassicaceae</taxon>
        <taxon>Cardamineae</taxon>
        <taxon>Nasturtium</taxon>
    </lineage>
</organism>
<evidence type="ECO:0000255" key="1">
    <source>
        <dbReference type="HAMAP-Rule" id="MF_01321"/>
    </source>
</evidence>
<dbReference type="EC" id="2.7.7.6" evidence="1"/>
<dbReference type="EMBL" id="AP009376">
    <property type="protein sequence ID" value="BAF50630.1"/>
    <property type="molecule type" value="Genomic_DNA"/>
</dbReference>
<dbReference type="RefSeq" id="YP_001123806.1">
    <property type="nucleotide sequence ID" value="NC_009275.1"/>
</dbReference>
<dbReference type="SMR" id="A4QLS5"/>
<dbReference type="GeneID" id="4962116"/>
<dbReference type="GO" id="GO:0009507">
    <property type="term" value="C:chloroplast"/>
    <property type="evidence" value="ECO:0007669"/>
    <property type="project" value="UniProtKB-SubCell"/>
</dbReference>
<dbReference type="GO" id="GO:0000428">
    <property type="term" value="C:DNA-directed RNA polymerase complex"/>
    <property type="evidence" value="ECO:0007669"/>
    <property type="project" value="UniProtKB-KW"/>
</dbReference>
<dbReference type="GO" id="GO:0005739">
    <property type="term" value="C:mitochondrion"/>
    <property type="evidence" value="ECO:0007669"/>
    <property type="project" value="GOC"/>
</dbReference>
<dbReference type="GO" id="GO:0003677">
    <property type="term" value="F:DNA binding"/>
    <property type="evidence" value="ECO:0007669"/>
    <property type="project" value="UniProtKB-UniRule"/>
</dbReference>
<dbReference type="GO" id="GO:0003899">
    <property type="term" value="F:DNA-directed RNA polymerase activity"/>
    <property type="evidence" value="ECO:0007669"/>
    <property type="project" value="UniProtKB-UniRule"/>
</dbReference>
<dbReference type="GO" id="GO:0032549">
    <property type="term" value="F:ribonucleoside binding"/>
    <property type="evidence" value="ECO:0007669"/>
    <property type="project" value="InterPro"/>
</dbReference>
<dbReference type="GO" id="GO:0006351">
    <property type="term" value="P:DNA-templated transcription"/>
    <property type="evidence" value="ECO:0007669"/>
    <property type="project" value="UniProtKB-UniRule"/>
</dbReference>
<dbReference type="CDD" id="cd00653">
    <property type="entry name" value="RNA_pol_B_RPB2"/>
    <property type="match status" value="1"/>
</dbReference>
<dbReference type="FunFam" id="2.40.50.150:FF:000006">
    <property type="entry name" value="DNA-directed RNA polymerase subunit beta"/>
    <property type="match status" value="1"/>
</dbReference>
<dbReference type="FunFam" id="3.90.1110.10:FF:000009">
    <property type="entry name" value="DNA-directed RNA polymerase subunit beta"/>
    <property type="match status" value="1"/>
</dbReference>
<dbReference type="Gene3D" id="2.40.50.100">
    <property type="match status" value="1"/>
</dbReference>
<dbReference type="Gene3D" id="2.40.50.150">
    <property type="match status" value="1"/>
</dbReference>
<dbReference type="Gene3D" id="3.90.1100.10">
    <property type="match status" value="1"/>
</dbReference>
<dbReference type="Gene3D" id="2.30.150.10">
    <property type="entry name" value="DNA-directed RNA polymerase, beta subunit, external 1 domain"/>
    <property type="match status" value="1"/>
</dbReference>
<dbReference type="Gene3D" id="2.40.270.10">
    <property type="entry name" value="DNA-directed RNA polymerase, subunit 2, domain 6"/>
    <property type="match status" value="2"/>
</dbReference>
<dbReference type="Gene3D" id="3.90.1800.10">
    <property type="entry name" value="RNA polymerase alpha subunit dimerisation domain"/>
    <property type="match status" value="1"/>
</dbReference>
<dbReference type="Gene3D" id="3.90.1110.10">
    <property type="entry name" value="RNA polymerase Rpb2, domain 2"/>
    <property type="match status" value="1"/>
</dbReference>
<dbReference type="HAMAP" id="MF_01321">
    <property type="entry name" value="RNApol_bact_RpoB"/>
    <property type="match status" value="1"/>
</dbReference>
<dbReference type="InterPro" id="IPR042107">
    <property type="entry name" value="DNA-dir_RNA_pol_bsu_ext_1_sf"/>
</dbReference>
<dbReference type="InterPro" id="IPR015712">
    <property type="entry name" value="DNA-dir_RNA_pol_su2"/>
</dbReference>
<dbReference type="InterPro" id="IPR007120">
    <property type="entry name" value="DNA-dir_RNAP_su2_dom"/>
</dbReference>
<dbReference type="InterPro" id="IPR037033">
    <property type="entry name" value="DNA-dir_RNAP_su2_hyb_sf"/>
</dbReference>
<dbReference type="InterPro" id="IPR010243">
    <property type="entry name" value="RNA_pol_bsu_bac"/>
</dbReference>
<dbReference type="InterPro" id="IPR007121">
    <property type="entry name" value="RNA_pol_bsu_CS"/>
</dbReference>
<dbReference type="InterPro" id="IPR007642">
    <property type="entry name" value="RNA_pol_Rpb2_2"/>
</dbReference>
<dbReference type="InterPro" id="IPR037034">
    <property type="entry name" value="RNA_pol_Rpb2_2_sf"/>
</dbReference>
<dbReference type="InterPro" id="IPR007645">
    <property type="entry name" value="RNA_pol_Rpb2_3"/>
</dbReference>
<dbReference type="InterPro" id="IPR007641">
    <property type="entry name" value="RNA_pol_Rpb2_7"/>
</dbReference>
<dbReference type="InterPro" id="IPR014724">
    <property type="entry name" value="RNA_pol_RPB2_OB-fold"/>
</dbReference>
<dbReference type="NCBIfam" id="NF001616">
    <property type="entry name" value="PRK00405.1"/>
    <property type="match status" value="1"/>
</dbReference>
<dbReference type="PANTHER" id="PTHR20856">
    <property type="entry name" value="DNA-DIRECTED RNA POLYMERASE I SUBUNIT 2"/>
    <property type="match status" value="1"/>
</dbReference>
<dbReference type="Pfam" id="PF04561">
    <property type="entry name" value="RNA_pol_Rpb2_2"/>
    <property type="match status" value="1"/>
</dbReference>
<dbReference type="Pfam" id="PF04565">
    <property type="entry name" value="RNA_pol_Rpb2_3"/>
    <property type="match status" value="1"/>
</dbReference>
<dbReference type="Pfam" id="PF00562">
    <property type="entry name" value="RNA_pol_Rpb2_6"/>
    <property type="match status" value="1"/>
</dbReference>
<dbReference type="Pfam" id="PF04560">
    <property type="entry name" value="RNA_pol_Rpb2_7"/>
    <property type="match status" value="1"/>
</dbReference>
<dbReference type="SUPFAM" id="SSF64484">
    <property type="entry name" value="beta and beta-prime subunits of DNA dependent RNA-polymerase"/>
    <property type="match status" value="1"/>
</dbReference>
<dbReference type="PROSITE" id="PS01166">
    <property type="entry name" value="RNA_POL_BETA"/>
    <property type="match status" value="1"/>
</dbReference>
<keyword id="KW-0150">Chloroplast</keyword>
<keyword id="KW-0240">DNA-directed RNA polymerase</keyword>
<keyword id="KW-0548">Nucleotidyltransferase</keyword>
<keyword id="KW-0934">Plastid</keyword>
<keyword id="KW-0804">Transcription</keyword>
<keyword id="KW-0808">Transferase</keyword>
<comment type="function">
    <text evidence="1">DNA-dependent RNA polymerase catalyzes the transcription of DNA into RNA using the four ribonucleoside triphosphates as substrates.</text>
</comment>
<comment type="catalytic activity">
    <reaction evidence="1">
        <text>RNA(n) + a ribonucleoside 5'-triphosphate = RNA(n+1) + diphosphate</text>
        <dbReference type="Rhea" id="RHEA:21248"/>
        <dbReference type="Rhea" id="RHEA-COMP:14527"/>
        <dbReference type="Rhea" id="RHEA-COMP:17342"/>
        <dbReference type="ChEBI" id="CHEBI:33019"/>
        <dbReference type="ChEBI" id="CHEBI:61557"/>
        <dbReference type="ChEBI" id="CHEBI:140395"/>
        <dbReference type="EC" id="2.7.7.6"/>
    </reaction>
</comment>
<comment type="subunit">
    <text evidence="1">In plastids the minimal PEP RNA polymerase catalytic core is composed of four subunits: alpha, beta, beta', and beta''. When a (nuclear-encoded) sigma factor is associated with the core the holoenzyme is formed, which can initiate transcription.</text>
</comment>
<comment type="subcellular location">
    <subcellularLocation>
        <location>Plastid</location>
        <location>Chloroplast</location>
    </subcellularLocation>
</comment>
<comment type="similarity">
    <text evidence="1">Belongs to the RNA polymerase beta chain family.</text>
</comment>
<geneLocation type="chloroplast"/>
<reference key="1">
    <citation type="submission" date="2007-03" db="EMBL/GenBank/DDBJ databases">
        <title>Sequencing analysis of Nasturtium officinale chloroplast DNA.</title>
        <authorList>
            <person name="Hosouchi T."/>
            <person name="Tsuruoka H."/>
            <person name="Kotani H."/>
        </authorList>
    </citation>
    <scope>NUCLEOTIDE SEQUENCE [LARGE SCALE GENOMIC DNA]</scope>
</reference>
<gene>
    <name evidence="1" type="primary">rpoB</name>
</gene>
<proteinExistence type="inferred from homology"/>
<accession>A4QLS5</accession>
<protein>
    <recommendedName>
        <fullName evidence="1">DNA-directed RNA polymerase subunit beta</fullName>
        <ecNumber evidence="1">2.7.7.6</ecNumber>
    </recommendedName>
    <alternativeName>
        <fullName evidence="1">PEP</fullName>
    </alternativeName>
    <alternativeName>
        <fullName evidence="1">Plastid-encoded RNA polymerase subunit beta</fullName>
        <shortName evidence="1">RNA polymerase subunit beta</shortName>
    </alternativeName>
</protein>
<feature type="chain" id="PRO_0000300449" description="DNA-directed RNA polymerase subunit beta">
    <location>
        <begin position="1"/>
        <end position="1072"/>
    </location>
</feature>
<sequence>MLGDGKEGTSTIPGFNQIQFEGFYRFIDQGLIEELSKFPKIEDIDHEIEFQLFMETYQLVEPLIKERDAVYESLTYSSELYVSAGLIWKTSRNMQEQRIFIGNIPLMNSLGTSIVNGIYRIVINQILQSPGIYYQSELDHNGISVYTGTIISDWGGRLELEIDKKARIWARVSRKQKISILVLSSAMGSNLREILENVCYPEIFLSFLTDKEKKKIGSKENAILEFYQQFSCVGGDPIFSESLCKELQKKFFHQRCELGRIGRRNINWRLNLNIPQNNIFLLPRDILAAADHLIGMKFGMGTLDDMNHLKNKRIRSVADLLQDQLGLALSRLENVVKGTISGAIRHKLIPTPQNLVTSTPLTTTYESFFGLHPLSQVLDRTNPLTQIVHGRKLSYLGPGGLTGRTANFRIRDIHPSHYGRICPIDTSEGINVGLIGSLSIHARIGDWGSLESPFYELFEKSKKARIRMLFLSPSQDEYFMIAAGNSLALNRGIQEEQAVPARYRQEFLTIAWEEVHLRSIFPFQYFSIGASLIPFIEHNDANRALMSSNMQRQAVPLSRSEKCIVGTGLERQVALDSGVPAIAEHEGKILYTDTEKIVFSGNGDTLSIPLIMYERSNKNTCMHQKPQVRRGKCIKKGQILADGAATVGGELALGKNILVAYMPWEGYNFEDAVLISECLVYGDIYTSFHIRKYEIQTHVTTQGPERITKEIPHLEGRLLRHLDKNGIVMLGSWVETGDILVGKLTPQVAKESSYAPEDRLLRAILGIQVSTSKETCLKLPIGGRGRVIDVRWVQKKGGSSYNPEIIRVYISQKREIKVGDKVAGRHGNKGIISKILPRQDMPYLQDGRPVDMVFNPLGVPSRMNVGQIFECSLGLAGSLLDRHYRIAPFDERYEQEASRKLVFSELYKASKQTANPWVFEPEYPGKSRIFDGRTGDPFEQPVIIGKPYILKLIHQVDDKIHGRSSGHYALVTQQPLRGRSKQGGQRVGEMEVWALEGFGVAHILQEMLTYKSDHIRARQEVLGTTIIGGTIPKPEDAPESFRLLVRELRSLALELNHFLVSEKNFQINRKEV</sequence>
<name>RPOB_NASOF</name>